<reference key="1">
    <citation type="journal article" date="2005" name="Nucleic Acids Res.">
        <title>The genome sequence of Salmonella enterica serovar Choleraesuis, a highly invasive and resistant zoonotic pathogen.</title>
        <authorList>
            <person name="Chiu C.-H."/>
            <person name="Tang P."/>
            <person name="Chu C."/>
            <person name="Hu S."/>
            <person name="Bao Q."/>
            <person name="Yu J."/>
            <person name="Chou Y.-Y."/>
            <person name="Wang H.-S."/>
            <person name="Lee Y.-S."/>
        </authorList>
    </citation>
    <scope>NUCLEOTIDE SEQUENCE [LARGE SCALE GENOMIC DNA]</scope>
    <source>
        <strain>SC-B67</strain>
    </source>
</reference>
<proteinExistence type="inferred from homology"/>
<evidence type="ECO:0000255" key="1">
    <source>
        <dbReference type="HAMAP-Rule" id="MF_00435"/>
    </source>
</evidence>
<evidence type="ECO:0000255" key="2">
    <source>
        <dbReference type="PROSITE-ProRule" id="PRU01197"/>
    </source>
</evidence>
<evidence type="ECO:0000255" key="3">
    <source>
        <dbReference type="PROSITE-ProRule" id="PRU01198"/>
    </source>
</evidence>
<dbReference type="EC" id="1.1.1.86" evidence="1"/>
<dbReference type="EMBL" id="AE017220">
    <property type="protein sequence ID" value="AAX67720.1"/>
    <property type="molecule type" value="Genomic_DNA"/>
</dbReference>
<dbReference type="RefSeq" id="WP_000024943.1">
    <property type="nucleotide sequence ID" value="NC_006905.1"/>
</dbReference>
<dbReference type="SMR" id="Q57HU2"/>
<dbReference type="KEGG" id="sec:SCH_3814"/>
<dbReference type="HOGENOM" id="CLU_551905_0_0_6"/>
<dbReference type="UniPathway" id="UPA00047">
    <property type="reaction ID" value="UER00056"/>
</dbReference>
<dbReference type="UniPathway" id="UPA00049">
    <property type="reaction ID" value="UER00060"/>
</dbReference>
<dbReference type="Proteomes" id="UP000000538">
    <property type="component" value="Chromosome"/>
</dbReference>
<dbReference type="GO" id="GO:0005829">
    <property type="term" value="C:cytosol"/>
    <property type="evidence" value="ECO:0007669"/>
    <property type="project" value="TreeGrafter"/>
</dbReference>
<dbReference type="GO" id="GO:0004455">
    <property type="term" value="F:ketol-acid reductoisomerase activity"/>
    <property type="evidence" value="ECO:0007669"/>
    <property type="project" value="UniProtKB-UniRule"/>
</dbReference>
<dbReference type="GO" id="GO:0000287">
    <property type="term" value="F:magnesium ion binding"/>
    <property type="evidence" value="ECO:0007669"/>
    <property type="project" value="UniProtKB-UniRule"/>
</dbReference>
<dbReference type="GO" id="GO:0009097">
    <property type="term" value="P:isoleucine biosynthetic process"/>
    <property type="evidence" value="ECO:0007669"/>
    <property type="project" value="UniProtKB-UniRule"/>
</dbReference>
<dbReference type="GO" id="GO:0009099">
    <property type="term" value="P:L-valine biosynthetic process"/>
    <property type="evidence" value="ECO:0007669"/>
    <property type="project" value="UniProtKB-UniRule"/>
</dbReference>
<dbReference type="FunFam" id="1.10.1040.10:FF:000007">
    <property type="entry name" value="Ketol-acid reductoisomerase (NADP(+))"/>
    <property type="match status" value="1"/>
</dbReference>
<dbReference type="FunFam" id="3.40.50.720:FF:000043">
    <property type="entry name" value="Ketol-acid reductoisomerase (NADP(+))"/>
    <property type="match status" value="1"/>
</dbReference>
<dbReference type="Gene3D" id="1.10.1040.10">
    <property type="entry name" value="N-(1-d-carboxylethyl)-l-norvaline Dehydrogenase, domain 2"/>
    <property type="match status" value="1"/>
</dbReference>
<dbReference type="Gene3D" id="3.40.50.720">
    <property type="entry name" value="NAD(P)-binding Rossmann-like Domain"/>
    <property type="match status" value="1"/>
</dbReference>
<dbReference type="HAMAP" id="MF_00435">
    <property type="entry name" value="IlvC"/>
    <property type="match status" value="1"/>
</dbReference>
<dbReference type="InterPro" id="IPR008927">
    <property type="entry name" value="6-PGluconate_DH-like_C_sf"/>
</dbReference>
<dbReference type="InterPro" id="IPR013328">
    <property type="entry name" value="6PGD_dom2"/>
</dbReference>
<dbReference type="InterPro" id="IPR013023">
    <property type="entry name" value="KARI"/>
</dbReference>
<dbReference type="InterPro" id="IPR000506">
    <property type="entry name" value="KARI_C"/>
</dbReference>
<dbReference type="InterPro" id="IPR013116">
    <property type="entry name" value="KARI_N"/>
</dbReference>
<dbReference type="InterPro" id="IPR036291">
    <property type="entry name" value="NAD(P)-bd_dom_sf"/>
</dbReference>
<dbReference type="NCBIfam" id="TIGR00465">
    <property type="entry name" value="ilvC"/>
    <property type="match status" value="1"/>
</dbReference>
<dbReference type="NCBIfam" id="NF003557">
    <property type="entry name" value="PRK05225.1"/>
    <property type="match status" value="1"/>
</dbReference>
<dbReference type="PANTHER" id="PTHR21371">
    <property type="entry name" value="KETOL-ACID REDUCTOISOMERASE, MITOCHONDRIAL"/>
    <property type="match status" value="1"/>
</dbReference>
<dbReference type="PANTHER" id="PTHR21371:SF1">
    <property type="entry name" value="KETOL-ACID REDUCTOISOMERASE, MITOCHONDRIAL"/>
    <property type="match status" value="1"/>
</dbReference>
<dbReference type="Pfam" id="PF01450">
    <property type="entry name" value="KARI_C"/>
    <property type="match status" value="2"/>
</dbReference>
<dbReference type="Pfam" id="PF07991">
    <property type="entry name" value="KARI_N"/>
    <property type="match status" value="1"/>
</dbReference>
<dbReference type="SUPFAM" id="SSF48179">
    <property type="entry name" value="6-phosphogluconate dehydrogenase C-terminal domain-like"/>
    <property type="match status" value="2"/>
</dbReference>
<dbReference type="SUPFAM" id="SSF51735">
    <property type="entry name" value="NAD(P)-binding Rossmann-fold domains"/>
    <property type="match status" value="1"/>
</dbReference>
<dbReference type="PROSITE" id="PS51851">
    <property type="entry name" value="KARI_C"/>
    <property type="match status" value="2"/>
</dbReference>
<dbReference type="PROSITE" id="PS51850">
    <property type="entry name" value="KARI_N"/>
    <property type="match status" value="1"/>
</dbReference>
<name>ILVC_SALCH</name>
<comment type="function">
    <text evidence="1">Involved in the biosynthesis of branched-chain amino acids (BCAA). Catalyzes an alkyl-migration followed by a ketol-acid reduction of (S)-2-acetolactate (S2AL) to yield (R)-2,3-dihydroxy-isovalerate. In the isomerase reaction, S2AL is rearranged via a Mg-dependent methyl migration to produce 3-hydroxy-3-methyl-2-ketobutyrate (HMKB). In the reductase reaction, this 2-ketoacid undergoes a metal-dependent reduction by NADPH to yield (R)-2,3-dihydroxy-isovalerate.</text>
</comment>
<comment type="catalytic activity">
    <reaction evidence="1">
        <text>(2R)-2,3-dihydroxy-3-methylbutanoate + NADP(+) = (2S)-2-acetolactate + NADPH + H(+)</text>
        <dbReference type="Rhea" id="RHEA:22068"/>
        <dbReference type="ChEBI" id="CHEBI:15378"/>
        <dbReference type="ChEBI" id="CHEBI:49072"/>
        <dbReference type="ChEBI" id="CHEBI:57783"/>
        <dbReference type="ChEBI" id="CHEBI:58349"/>
        <dbReference type="ChEBI" id="CHEBI:58476"/>
        <dbReference type="EC" id="1.1.1.86"/>
    </reaction>
</comment>
<comment type="catalytic activity">
    <reaction evidence="1">
        <text>(2R,3R)-2,3-dihydroxy-3-methylpentanoate + NADP(+) = (S)-2-ethyl-2-hydroxy-3-oxobutanoate + NADPH + H(+)</text>
        <dbReference type="Rhea" id="RHEA:13493"/>
        <dbReference type="ChEBI" id="CHEBI:15378"/>
        <dbReference type="ChEBI" id="CHEBI:49256"/>
        <dbReference type="ChEBI" id="CHEBI:49258"/>
        <dbReference type="ChEBI" id="CHEBI:57783"/>
        <dbReference type="ChEBI" id="CHEBI:58349"/>
        <dbReference type="EC" id="1.1.1.86"/>
    </reaction>
</comment>
<comment type="cofactor">
    <cofactor evidence="1">
        <name>Mg(2+)</name>
        <dbReference type="ChEBI" id="CHEBI:18420"/>
    </cofactor>
    <text evidence="1">Binds 2 magnesium ions per subunit.</text>
</comment>
<comment type="pathway">
    <text evidence="1">Amino-acid biosynthesis; L-isoleucine biosynthesis; L-isoleucine from 2-oxobutanoate: step 2/4.</text>
</comment>
<comment type="pathway">
    <text evidence="1">Amino-acid biosynthesis; L-valine biosynthesis; L-valine from pyruvate: step 2/4.</text>
</comment>
<comment type="similarity">
    <text evidence="1">Belongs to the ketol-acid reductoisomerase family.</text>
</comment>
<keyword id="KW-0028">Amino-acid biosynthesis</keyword>
<keyword id="KW-0100">Branched-chain amino acid biosynthesis</keyword>
<keyword id="KW-0460">Magnesium</keyword>
<keyword id="KW-0479">Metal-binding</keyword>
<keyword id="KW-0521">NADP</keyword>
<keyword id="KW-0560">Oxidoreductase</keyword>
<keyword id="KW-0677">Repeat</keyword>
<sequence>MANYFNTLNLRQQLAQLGKCRFMGRDEFADGASYLQGKKVVIVGCGAQGLNQGLNMRDSGLDISYALRKEAIAEKRASWRKATENGFKVGTYEELIPQADLVVNLTPDKQHSDVVRSVQPLMKDGAALGYSHGFNIVEVGEQIRKDITVVMVAPKCPGTEVREEYKRGFGVPTLIAVHPENDPKGEGMAIAKAWAAATGGHRAGVLESSFVAEVKSDLMGEQTILCGMLQAGSLLCFDKLVAEGTDPAYAEKLIQFGWETITEALKQGGITLMMDRLSNPAKLRAYALSEQLKEIMAPLFQKHMDDIISGEFSSGMMADWANDDKKLLTWREETGKTAFETAPQFEGKIGEQEYFDKGVLMIAMVKAGVELAFETMVDSGIIEESAYYESLHELPLIANTIARKRLYEMNVVISDTAEYGNYLFSYACVPLLKPFMAELQPGDLGSAIPEGAVDNAQLRDVNDAIRSHAIEQVGKKLRGYMTDMKRIAVAG</sequence>
<feature type="chain" id="PRO_0000226197" description="Ketol-acid reductoisomerase (NADP(+))">
    <location>
        <begin position="1"/>
        <end position="491"/>
    </location>
</feature>
<feature type="domain" description="KARI N-terminal Rossmann" evidence="2">
    <location>
        <begin position="15"/>
        <end position="208"/>
    </location>
</feature>
<feature type="domain" description="KARI C-terminal knotted 1" evidence="3">
    <location>
        <begin position="209"/>
        <end position="344"/>
    </location>
</feature>
<feature type="domain" description="KARI C-terminal knotted 2" evidence="3">
    <location>
        <begin position="345"/>
        <end position="484"/>
    </location>
</feature>
<feature type="active site" evidence="1">
    <location>
        <position position="132"/>
    </location>
</feature>
<feature type="binding site" evidence="1">
    <location>
        <begin position="45"/>
        <end position="48"/>
    </location>
    <ligand>
        <name>NADP(+)</name>
        <dbReference type="ChEBI" id="CHEBI:58349"/>
    </ligand>
</feature>
<feature type="binding site" evidence="1">
    <location>
        <position position="68"/>
    </location>
    <ligand>
        <name>NADP(+)</name>
        <dbReference type="ChEBI" id="CHEBI:58349"/>
    </ligand>
</feature>
<feature type="binding site" evidence="1">
    <location>
        <position position="76"/>
    </location>
    <ligand>
        <name>NADP(+)</name>
        <dbReference type="ChEBI" id="CHEBI:58349"/>
    </ligand>
</feature>
<feature type="binding site" evidence="1">
    <location>
        <position position="78"/>
    </location>
    <ligand>
        <name>NADP(+)</name>
        <dbReference type="ChEBI" id="CHEBI:58349"/>
    </ligand>
</feature>
<feature type="binding site" evidence="1">
    <location>
        <begin position="108"/>
        <end position="110"/>
    </location>
    <ligand>
        <name>NADP(+)</name>
        <dbReference type="ChEBI" id="CHEBI:58349"/>
    </ligand>
</feature>
<feature type="binding site" evidence="1">
    <location>
        <position position="158"/>
    </location>
    <ligand>
        <name>NADP(+)</name>
        <dbReference type="ChEBI" id="CHEBI:58349"/>
    </ligand>
</feature>
<feature type="binding site" evidence="1">
    <location>
        <position position="217"/>
    </location>
    <ligand>
        <name>Mg(2+)</name>
        <dbReference type="ChEBI" id="CHEBI:18420"/>
        <label>1</label>
    </ligand>
</feature>
<feature type="binding site" evidence="1">
    <location>
        <position position="217"/>
    </location>
    <ligand>
        <name>Mg(2+)</name>
        <dbReference type="ChEBI" id="CHEBI:18420"/>
        <label>2</label>
    </ligand>
</feature>
<feature type="binding site" evidence="1">
    <location>
        <position position="221"/>
    </location>
    <ligand>
        <name>Mg(2+)</name>
        <dbReference type="ChEBI" id="CHEBI:18420"/>
        <label>1</label>
    </ligand>
</feature>
<feature type="binding site" evidence="1">
    <location>
        <position position="389"/>
    </location>
    <ligand>
        <name>Mg(2+)</name>
        <dbReference type="ChEBI" id="CHEBI:18420"/>
        <label>2</label>
    </ligand>
</feature>
<feature type="binding site" evidence="1">
    <location>
        <position position="393"/>
    </location>
    <ligand>
        <name>Mg(2+)</name>
        <dbReference type="ChEBI" id="CHEBI:18420"/>
        <label>2</label>
    </ligand>
</feature>
<feature type="binding site" evidence="1">
    <location>
        <position position="414"/>
    </location>
    <ligand>
        <name>substrate</name>
    </ligand>
</feature>
<organism>
    <name type="scientific">Salmonella choleraesuis (strain SC-B67)</name>
    <dbReference type="NCBI Taxonomy" id="321314"/>
    <lineage>
        <taxon>Bacteria</taxon>
        <taxon>Pseudomonadati</taxon>
        <taxon>Pseudomonadota</taxon>
        <taxon>Gammaproteobacteria</taxon>
        <taxon>Enterobacterales</taxon>
        <taxon>Enterobacteriaceae</taxon>
        <taxon>Salmonella</taxon>
    </lineage>
</organism>
<accession>Q57HU2</accession>
<protein>
    <recommendedName>
        <fullName evidence="1">Ketol-acid reductoisomerase (NADP(+))</fullName>
        <shortName evidence="1">KARI</shortName>
        <ecNumber evidence="1">1.1.1.86</ecNumber>
    </recommendedName>
    <alternativeName>
        <fullName evidence="1">Acetohydroxy-acid isomeroreductase</fullName>
        <shortName evidence="1">AHIR</shortName>
    </alternativeName>
    <alternativeName>
        <fullName evidence="1">Alpha-keto-beta-hydroxylacyl reductoisomerase</fullName>
    </alternativeName>
    <alternativeName>
        <fullName evidence="1">Ketol-acid reductoisomerase type 2</fullName>
    </alternativeName>
    <alternativeName>
        <fullName evidence="1">Ketol-acid reductoisomerase type II</fullName>
    </alternativeName>
</protein>
<gene>
    <name evidence="1" type="primary">ilvC</name>
    <name type="ordered locus">SCH_3814</name>
</gene>